<evidence type="ECO:0000250" key="1">
    <source>
        <dbReference type="UniProtKB" id="P68363"/>
    </source>
</evidence>
<evidence type="ECO:0000250" key="2">
    <source>
        <dbReference type="UniProtKB" id="Q13509"/>
    </source>
</evidence>
<evidence type="ECO:0000256" key="3">
    <source>
        <dbReference type="SAM" id="MobiDB-lite"/>
    </source>
</evidence>
<evidence type="ECO:0000305" key="4"/>
<organism>
    <name type="scientific">Aspergillus fumigatus (strain ATCC MYA-4609 / CBS 101355 / FGSC A1100 / Af293)</name>
    <name type="common">Neosartorya fumigata</name>
    <dbReference type="NCBI Taxonomy" id="330879"/>
    <lineage>
        <taxon>Eukaryota</taxon>
        <taxon>Fungi</taxon>
        <taxon>Dikarya</taxon>
        <taxon>Ascomycota</taxon>
        <taxon>Pezizomycotina</taxon>
        <taxon>Eurotiomycetes</taxon>
        <taxon>Eurotiomycetidae</taxon>
        <taxon>Eurotiales</taxon>
        <taxon>Aspergillaceae</taxon>
        <taxon>Aspergillus</taxon>
        <taxon>Aspergillus subgen. Fumigati</taxon>
    </lineage>
</organism>
<keyword id="KW-0963">Cytoplasm</keyword>
<keyword id="KW-0206">Cytoskeleton</keyword>
<keyword id="KW-0342">GTP-binding</keyword>
<keyword id="KW-0460">Magnesium</keyword>
<keyword id="KW-0479">Metal-binding</keyword>
<keyword id="KW-0493">Microtubule</keyword>
<keyword id="KW-0547">Nucleotide-binding</keyword>
<keyword id="KW-1185">Reference proteome</keyword>
<gene>
    <name type="ORF">AFUA_7G00250</name>
</gene>
<accession>Q4WA70</accession>
<feature type="chain" id="PRO_0000048394" description="Tubulin beta chain">
    <location>
        <begin position="1"/>
        <end position="448"/>
    </location>
</feature>
<feature type="region of interest" description="Disordered" evidence="3">
    <location>
        <begin position="429"/>
        <end position="448"/>
    </location>
</feature>
<feature type="compositionally biased region" description="Acidic residues" evidence="3">
    <location>
        <begin position="432"/>
        <end position="448"/>
    </location>
</feature>
<feature type="binding site" evidence="2">
    <location>
        <position position="11"/>
    </location>
    <ligand>
        <name>GTP</name>
        <dbReference type="ChEBI" id="CHEBI:37565"/>
    </ligand>
</feature>
<feature type="binding site" evidence="1">
    <location>
        <position position="69"/>
    </location>
    <ligand>
        <name>GTP</name>
        <dbReference type="ChEBI" id="CHEBI:37565"/>
    </ligand>
</feature>
<feature type="binding site" evidence="1">
    <location>
        <position position="69"/>
    </location>
    <ligand>
        <name>Mg(2+)</name>
        <dbReference type="ChEBI" id="CHEBI:18420"/>
    </ligand>
</feature>
<feature type="binding site" evidence="2">
    <location>
        <position position="138"/>
    </location>
    <ligand>
        <name>GTP</name>
        <dbReference type="ChEBI" id="CHEBI:37565"/>
    </ligand>
</feature>
<feature type="binding site" evidence="2">
    <location>
        <position position="142"/>
    </location>
    <ligand>
        <name>GTP</name>
        <dbReference type="ChEBI" id="CHEBI:37565"/>
    </ligand>
</feature>
<feature type="binding site" evidence="2">
    <location>
        <position position="143"/>
    </location>
    <ligand>
        <name>GTP</name>
        <dbReference type="ChEBI" id="CHEBI:37565"/>
    </ligand>
</feature>
<feature type="binding site" evidence="2">
    <location>
        <position position="144"/>
    </location>
    <ligand>
        <name>GTP</name>
        <dbReference type="ChEBI" id="CHEBI:37565"/>
    </ligand>
</feature>
<feature type="binding site" evidence="2">
    <location>
        <position position="204"/>
    </location>
    <ligand>
        <name>GTP</name>
        <dbReference type="ChEBI" id="CHEBI:37565"/>
    </ligand>
</feature>
<feature type="binding site" evidence="2">
    <location>
        <position position="226"/>
    </location>
    <ligand>
        <name>GTP</name>
        <dbReference type="ChEBI" id="CHEBI:37565"/>
    </ligand>
</feature>
<dbReference type="EMBL" id="AAHF01000015">
    <property type="protein sequence ID" value="EAL84866.1"/>
    <property type="molecule type" value="Genomic_DNA"/>
</dbReference>
<dbReference type="RefSeq" id="XP_746904.1">
    <property type="nucleotide sequence ID" value="XM_741811.1"/>
</dbReference>
<dbReference type="SMR" id="Q4WA70"/>
<dbReference type="FunCoup" id="Q4WA70">
    <property type="interactions" value="1265"/>
</dbReference>
<dbReference type="STRING" id="330879.Q4WA70"/>
<dbReference type="EnsemblFungi" id="EAL84866">
    <property type="protein sequence ID" value="EAL84866"/>
    <property type="gene ID" value="AFUA_7G00250"/>
</dbReference>
<dbReference type="GeneID" id="3504259"/>
<dbReference type="KEGG" id="afm:AFUA_7G00250"/>
<dbReference type="VEuPathDB" id="FungiDB:Afu7g00250"/>
<dbReference type="eggNOG" id="KOG1375">
    <property type="taxonomic scope" value="Eukaryota"/>
</dbReference>
<dbReference type="HOGENOM" id="CLU_015718_1_1_1"/>
<dbReference type="InParanoid" id="Q4WA70"/>
<dbReference type="OMA" id="FLTCCAI"/>
<dbReference type="OrthoDB" id="1662883at2759"/>
<dbReference type="Proteomes" id="UP000002530">
    <property type="component" value="Chromosome 7"/>
</dbReference>
<dbReference type="GO" id="GO:0005737">
    <property type="term" value="C:cytoplasm"/>
    <property type="evidence" value="ECO:0000318"/>
    <property type="project" value="GO_Central"/>
</dbReference>
<dbReference type="GO" id="GO:0005874">
    <property type="term" value="C:microtubule"/>
    <property type="evidence" value="ECO:0000318"/>
    <property type="project" value="GO_Central"/>
</dbReference>
<dbReference type="GO" id="GO:0005525">
    <property type="term" value="F:GTP binding"/>
    <property type="evidence" value="ECO:0000318"/>
    <property type="project" value="GO_Central"/>
</dbReference>
<dbReference type="GO" id="GO:0003924">
    <property type="term" value="F:GTPase activity"/>
    <property type="evidence" value="ECO:0007669"/>
    <property type="project" value="InterPro"/>
</dbReference>
<dbReference type="GO" id="GO:0046872">
    <property type="term" value="F:metal ion binding"/>
    <property type="evidence" value="ECO:0007669"/>
    <property type="project" value="UniProtKB-KW"/>
</dbReference>
<dbReference type="GO" id="GO:0005200">
    <property type="term" value="F:structural constituent of cytoskeleton"/>
    <property type="evidence" value="ECO:0000318"/>
    <property type="project" value="GO_Central"/>
</dbReference>
<dbReference type="GO" id="GO:0000226">
    <property type="term" value="P:microtubule cytoskeleton organization"/>
    <property type="evidence" value="ECO:0000318"/>
    <property type="project" value="GO_Central"/>
</dbReference>
<dbReference type="GO" id="GO:0000278">
    <property type="term" value="P:mitotic cell cycle"/>
    <property type="evidence" value="ECO:0000318"/>
    <property type="project" value="GO_Central"/>
</dbReference>
<dbReference type="CDD" id="cd02187">
    <property type="entry name" value="beta_tubulin"/>
    <property type="match status" value="1"/>
</dbReference>
<dbReference type="FunFam" id="1.10.287.600:FF:000002">
    <property type="entry name" value="Tubulin beta chain"/>
    <property type="match status" value="1"/>
</dbReference>
<dbReference type="FunFam" id="3.30.1330.20:FF:000002">
    <property type="entry name" value="Tubulin beta chain"/>
    <property type="match status" value="1"/>
</dbReference>
<dbReference type="FunFam" id="3.40.50.1440:FF:000009">
    <property type="entry name" value="Tubulin beta chain"/>
    <property type="match status" value="1"/>
</dbReference>
<dbReference type="Gene3D" id="1.10.287.600">
    <property type="entry name" value="Helix hairpin bin"/>
    <property type="match status" value="1"/>
</dbReference>
<dbReference type="Gene3D" id="3.30.1330.20">
    <property type="entry name" value="Tubulin/FtsZ, C-terminal domain"/>
    <property type="match status" value="1"/>
</dbReference>
<dbReference type="Gene3D" id="3.40.50.1440">
    <property type="entry name" value="Tubulin/FtsZ, GTPase domain"/>
    <property type="match status" value="1"/>
</dbReference>
<dbReference type="InterPro" id="IPR013838">
    <property type="entry name" value="Beta-tubulin_BS"/>
</dbReference>
<dbReference type="InterPro" id="IPR002453">
    <property type="entry name" value="Beta_tubulin"/>
</dbReference>
<dbReference type="InterPro" id="IPR008280">
    <property type="entry name" value="Tub_FtsZ_C"/>
</dbReference>
<dbReference type="InterPro" id="IPR000217">
    <property type="entry name" value="Tubulin"/>
</dbReference>
<dbReference type="InterPro" id="IPR037103">
    <property type="entry name" value="Tubulin/FtsZ-like_C"/>
</dbReference>
<dbReference type="InterPro" id="IPR018316">
    <property type="entry name" value="Tubulin/FtsZ_2-layer-sand-dom"/>
</dbReference>
<dbReference type="InterPro" id="IPR036525">
    <property type="entry name" value="Tubulin/FtsZ_GTPase_sf"/>
</dbReference>
<dbReference type="InterPro" id="IPR023123">
    <property type="entry name" value="Tubulin_C"/>
</dbReference>
<dbReference type="InterPro" id="IPR017975">
    <property type="entry name" value="Tubulin_CS"/>
</dbReference>
<dbReference type="InterPro" id="IPR003008">
    <property type="entry name" value="Tubulin_FtsZ_GTPase"/>
</dbReference>
<dbReference type="PANTHER" id="PTHR11588">
    <property type="entry name" value="TUBULIN"/>
    <property type="match status" value="1"/>
</dbReference>
<dbReference type="Pfam" id="PF00091">
    <property type="entry name" value="Tubulin"/>
    <property type="match status" value="1"/>
</dbReference>
<dbReference type="Pfam" id="PF03953">
    <property type="entry name" value="Tubulin_C"/>
    <property type="match status" value="1"/>
</dbReference>
<dbReference type="PRINTS" id="PR01163">
    <property type="entry name" value="BETATUBULIN"/>
</dbReference>
<dbReference type="PRINTS" id="PR01161">
    <property type="entry name" value="TUBULIN"/>
</dbReference>
<dbReference type="SMART" id="SM00864">
    <property type="entry name" value="Tubulin"/>
    <property type="match status" value="1"/>
</dbReference>
<dbReference type="SMART" id="SM00865">
    <property type="entry name" value="Tubulin_C"/>
    <property type="match status" value="1"/>
</dbReference>
<dbReference type="SUPFAM" id="SSF55307">
    <property type="entry name" value="Tubulin C-terminal domain-like"/>
    <property type="match status" value="1"/>
</dbReference>
<dbReference type="SUPFAM" id="SSF52490">
    <property type="entry name" value="Tubulin nucleotide-binding domain-like"/>
    <property type="match status" value="1"/>
</dbReference>
<dbReference type="PROSITE" id="PS00227">
    <property type="entry name" value="TUBULIN"/>
    <property type="match status" value="1"/>
</dbReference>
<dbReference type="PROSITE" id="PS00228">
    <property type="entry name" value="TUBULIN_B_AUTOREG"/>
    <property type="match status" value="1"/>
</dbReference>
<protein>
    <recommendedName>
        <fullName>Tubulin beta chain</fullName>
    </recommendedName>
    <alternativeName>
        <fullName>Beta-tubulin</fullName>
    </alternativeName>
</protein>
<reference key="1">
    <citation type="journal article" date="2005" name="Nature">
        <title>Genomic sequence of the pathogenic and allergenic filamentous fungus Aspergillus fumigatus.</title>
        <authorList>
            <person name="Nierman W.C."/>
            <person name="Pain A."/>
            <person name="Anderson M.J."/>
            <person name="Wortman J.R."/>
            <person name="Kim H.S."/>
            <person name="Arroyo J."/>
            <person name="Berriman M."/>
            <person name="Abe K."/>
            <person name="Archer D.B."/>
            <person name="Bermejo C."/>
            <person name="Bennett J.W."/>
            <person name="Bowyer P."/>
            <person name="Chen D."/>
            <person name="Collins M."/>
            <person name="Coulsen R."/>
            <person name="Davies R."/>
            <person name="Dyer P.S."/>
            <person name="Farman M.L."/>
            <person name="Fedorova N."/>
            <person name="Fedorova N.D."/>
            <person name="Feldblyum T.V."/>
            <person name="Fischer R."/>
            <person name="Fosker N."/>
            <person name="Fraser A."/>
            <person name="Garcia J.L."/>
            <person name="Garcia M.J."/>
            <person name="Goble A."/>
            <person name="Goldman G.H."/>
            <person name="Gomi K."/>
            <person name="Griffith-Jones S."/>
            <person name="Gwilliam R."/>
            <person name="Haas B.J."/>
            <person name="Haas H."/>
            <person name="Harris D.E."/>
            <person name="Horiuchi H."/>
            <person name="Huang J."/>
            <person name="Humphray S."/>
            <person name="Jimenez J."/>
            <person name="Keller N."/>
            <person name="Khouri H."/>
            <person name="Kitamoto K."/>
            <person name="Kobayashi T."/>
            <person name="Konzack S."/>
            <person name="Kulkarni R."/>
            <person name="Kumagai T."/>
            <person name="Lafton A."/>
            <person name="Latge J.-P."/>
            <person name="Li W."/>
            <person name="Lord A."/>
            <person name="Lu C."/>
            <person name="Majoros W.H."/>
            <person name="May G.S."/>
            <person name="Miller B.L."/>
            <person name="Mohamoud Y."/>
            <person name="Molina M."/>
            <person name="Monod M."/>
            <person name="Mouyna I."/>
            <person name="Mulligan S."/>
            <person name="Murphy L.D."/>
            <person name="O'Neil S."/>
            <person name="Paulsen I."/>
            <person name="Penalva M.A."/>
            <person name="Pertea M."/>
            <person name="Price C."/>
            <person name="Pritchard B.L."/>
            <person name="Quail M.A."/>
            <person name="Rabbinowitsch E."/>
            <person name="Rawlins N."/>
            <person name="Rajandream M.A."/>
            <person name="Reichard U."/>
            <person name="Renauld H."/>
            <person name="Robson G.D."/>
            <person name="Rodriguez de Cordoba S."/>
            <person name="Rodriguez-Pena J.M."/>
            <person name="Ronning C.M."/>
            <person name="Rutter S."/>
            <person name="Salzberg S.L."/>
            <person name="Sanchez M."/>
            <person name="Sanchez-Ferrero J.C."/>
            <person name="Saunders D."/>
            <person name="Seeger K."/>
            <person name="Squares R."/>
            <person name="Squares S."/>
            <person name="Takeuchi M."/>
            <person name="Tekaia F."/>
            <person name="Turner G."/>
            <person name="Vazquez de Aldana C.R."/>
            <person name="Weidman J."/>
            <person name="White O."/>
            <person name="Woodward J.R."/>
            <person name="Yu J.-H."/>
            <person name="Fraser C.M."/>
            <person name="Galagan J.E."/>
            <person name="Asai K."/>
            <person name="Machida M."/>
            <person name="Hall N."/>
            <person name="Barrell B.G."/>
            <person name="Denning D.W."/>
        </authorList>
    </citation>
    <scope>NUCLEOTIDE SEQUENCE [LARGE SCALE GENOMIC DNA]</scope>
    <source>
        <strain>ATCC MYA-4609 / CBS 101355 / FGSC A1100 / Af293</strain>
    </source>
</reference>
<comment type="function">
    <text>Tubulin is the major constituent of microtubules, a cylinder consisting of laterally associated linear protofilaments composed of alpha- and beta-tubulin heterodimers. Microtubules grow by the addition of GTP-tubulin dimers to the microtubule end, where a stabilizing cap forms. Below the cap, tubulin dimers are in GDP-bound state, owing to GTPase activity of alpha-tubulin.</text>
</comment>
<comment type="cofactor">
    <cofactor evidence="1">
        <name>Mg(2+)</name>
        <dbReference type="ChEBI" id="CHEBI:18420"/>
    </cofactor>
</comment>
<comment type="subunit">
    <text>Dimer of alpha and beta chains. A typical microtubule is a hollow water-filled tube with an outer diameter of 25 nm and an inner diameter of 15 nM. Alpha-beta heterodimers associate head-to-tail to form protofilaments running lengthwise along the microtubule wall with the beta-tubulin subunit facing the microtubule plus end conferring a structural polarity. Microtubules usually have 13 protofilaments but different protofilament numbers can be found in some organisms and specialized cells.</text>
</comment>
<comment type="subcellular location">
    <subcellularLocation>
        <location>Cytoplasm</location>
        <location>Cytoskeleton</location>
    </subcellularLocation>
</comment>
<comment type="similarity">
    <text evidence="4">Belongs to the tubulin family.</text>
</comment>
<proteinExistence type="inferred from homology"/>
<sequence>MREIVHLQTGQCGNQVGAAFWQTISSEHGLDESGLCNASSDQQLERMNVYFNEVGNSKYVPRAVLVDLEPGTMDAIRSGPHGALFRPDNFVFGQSSAGNNWAKGHYTEGAELVDQVIDVVRREAESCDYLQGFQITHSLGGGTGAGMGTLLISKIREEFPDRMMATFSVLPSPKVSDTVVEPYNATLSVHQLVEHADETFCIDNEALYDICTRTLKLSSPSYGDLNHLVSTVMSGITASFRFPGQLNSDLRKLAVNMVPFPRLHFFMVGFAPLTSRGAQSFRAMSVPELTQQMFDSRNMMTACNFQNGRFLTCSALFRGKISMKEVDDQMLSIHTKNSGYFVEWIPNNVQTALCSVPPKGLKMSATFVGNSTSVQELFQRVATQFTAMFRRKAFLHWYTGEGMDEMEFTEAESNMNDLMSEYQQYQEASISDGEEQPYAEEAAYEAEE</sequence>
<name>TBB_ASPFU</name>